<evidence type="ECO:0000250" key="1"/>
<evidence type="ECO:0000255" key="2"/>
<evidence type="ECO:0000256" key="3">
    <source>
        <dbReference type="SAM" id="MobiDB-lite"/>
    </source>
</evidence>
<evidence type="ECO:0000269" key="4">
    <source>
    </source>
</evidence>
<evidence type="ECO:0000305" key="5"/>
<reference key="1">
    <citation type="journal article" date="2000" name="Science">
        <title>The genome sequence of Drosophila melanogaster.</title>
        <authorList>
            <person name="Adams M.D."/>
            <person name="Celniker S.E."/>
            <person name="Holt R.A."/>
            <person name="Evans C.A."/>
            <person name="Gocayne J.D."/>
            <person name="Amanatides P.G."/>
            <person name="Scherer S.E."/>
            <person name="Li P.W."/>
            <person name="Hoskins R.A."/>
            <person name="Galle R.F."/>
            <person name="George R.A."/>
            <person name="Lewis S.E."/>
            <person name="Richards S."/>
            <person name="Ashburner M."/>
            <person name="Henderson S.N."/>
            <person name="Sutton G.G."/>
            <person name="Wortman J.R."/>
            <person name="Yandell M.D."/>
            <person name="Zhang Q."/>
            <person name="Chen L.X."/>
            <person name="Brandon R.C."/>
            <person name="Rogers Y.-H.C."/>
            <person name="Blazej R.G."/>
            <person name="Champe M."/>
            <person name="Pfeiffer B.D."/>
            <person name="Wan K.H."/>
            <person name="Doyle C."/>
            <person name="Baxter E.G."/>
            <person name="Helt G."/>
            <person name="Nelson C.R."/>
            <person name="Miklos G.L.G."/>
            <person name="Abril J.F."/>
            <person name="Agbayani A."/>
            <person name="An H.-J."/>
            <person name="Andrews-Pfannkoch C."/>
            <person name="Baldwin D."/>
            <person name="Ballew R.M."/>
            <person name="Basu A."/>
            <person name="Baxendale J."/>
            <person name="Bayraktaroglu L."/>
            <person name="Beasley E.M."/>
            <person name="Beeson K.Y."/>
            <person name="Benos P.V."/>
            <person name="Berman B.P."/>
            <person name="Bhandari D."/>
            <person name="Bolshakov S."/>
            <person name="Borkova D."/>
            <person name="Botchan M.R."/>
            <person name="Bouck J."/>
            <person name="Brokstein P."/>
            <person name="Brottier P."/>
            <person name="Burtis K.C."/>
            <person name="Busam D.A."/>
            <person name="Butler H."/>
            <person name="Cadieu E."/>
            <person name="Center A."/>
            <person name="Chandra I."/>
            <person name="Cherry J.M."/>
            <person name="Cawley S."/>
            <person name="Dahlke C."/>
            <person name="Davenport L.B."/>
            <person name="Davies P."/>
            <person name="de Pablos B."/>
            <person name="Delcher A."/>
            <person name="Deng Z."/>
            <person name="Mays A.D."/>
            <person name="Dew I."/>
            <person name="Dietz S.M."/>
            <person name="Dodson K."/>
            <person name="Doup L.E."/>
            <person name="Downes M."/>
            <person name="Dugan-Rocha S."/>
            <person name="Dunkov B.C."/>
            <person name="Dunn P."/>
            <person name="Durbin K.J."/>
            <person name="Evangelista C.C."/>
            <person name="Ferraz C."/>
            <person name="Ferriera S."/>
            <person name="Fleischmann W."/>
            <person name="Fosler C."/>
            <person name="Gabrielian A.E."/>
            <person name="Garg N.S."/>
            <person name="Gelbart W.M."/>
            <person name="Glasser K."/>
            <person name="Glodek A."/>
            <person name="Gong F."/>
            <person name="Gorrell J.H."/>
            <person name="Gu Z."/>
            <person name="Guan P."/>
            <person name="Harris M."/>
            <person name="Harris N.L."/>
            <person name="Harvey D.A."/>
            <person name="Heiman T.J."/>
            <person name="Hernandez J.R."/>
            <person name="Houck J."/>
            <person name="Hostin D."/>
            <person name="Houston K.A."/>
            <person name="Howland T.J."/>
            <person name="Wei M.-H."/>
            <person name="Ibegwam C."/>
            <person name="Jalali M."/>
            <person name="Kalush F."/>
            <person name="Karpen G.H."/>
            <person name="Ke Z."/>
            <person name="Kennison J.A."/>
            <person name="Ketchum K.A."/>
            <person name="Kimmel B.E."/>
            <person name="Kodira C.D."/>
            <person name="Kraft C.L."/>
            <person name="Kravitz S."/>
            <person name="Kulp D."/>
            <person name="Lai Z."/>
            <person name="Lasko P."/>
            <person name="Lei Y."/>
            <person name="Levitsky A.A."/>
            <person name="Li J.H."/>
            <person name="Li Z."/>
            <person name="Liang Y."/>
            <person name="Lin X."/>
            <person name="Liu X."/>
            <person name="Mattei B."/>
            <person name="McIntosh T.C."/>
            <person name="McLeod M.P."/>
            <person name="McPherson D."/>
            <person name="Merkulov G."/>
            <person name="Milshina N.V."/>
            <person name="Mobarry C."/>
            <person name="Morris J."/>
            <person name="Moshrefi A."/>
            <person name="Mount S.M."/>
            <person name="Moy M."/>
            <person name="Murphy B."/>
            <person name="Murphy L."/>
            <person name="Muzny D.M."/>
            <person name="Nelson D.L."/>
            <person name="Nelson D.R."/>
            <person name="Nelson K.A."/>
            <person name="Nixon K."/>
            <person name="Nusskern D.R."/>
            <person name="Pacleb J.M."/>
            <person name="Palazzolo M."/>
            <person name="Pittman G.S."/>
            <person name="Pan S."/>
            <person name="Pollard J."/>
            <person name="Puri V."/>
            <person name="Reese M.G."/>
            <person name="Reinert K."/>
            <person name="Remington K."/>
            <person name="Saunders R.D.C."/>
            <person name="Scheeler F."/>
            <person name="Shen H."/>
            <person name="Shue B.C."/>
            <person name="Siden-Kiamos I."/>
            <person name="Simpson M."/>
            <person name="Skupski M.P."/>
            <person name="Smith T.J."/>
            <person name="Spier E."/>
            <person name="Spradling A.C."/>
            <person name="Stapleton M."/>
            <person name="Strong R."/>
            <person name="Sun E."/>
            <person name="Svirskas R."/>
            <person name="Tector C."/>
            <person name="Turner R."/>
            <person name="Venter E."/>
            <person name="Wang A.H."/>
            <person name="Wang X."/>
            <person name="Wang Z.-Y."/>
            <person name="Wassarman D.A."/>
            <person name="Weinstock G.M."/>
            <person name="Weissenbach J."/>
            <person name="Williams S.M."/>
            <person name="Woodage T."/>
            <person name="Worley K.C."/>
            <person name="Wu D."/>
            <person name="Yang S."/>
            <person name="Yao Q.A."/>
            <person name="Ye J."/>
            <person name="Yeh R.-F."/>
            <person name="Zaveri J.S."/>
            <person name="Zhan M."/>
            <person name="Zhang G."/>
            <person name="Zhao Q."/>
            <person name="Zheng L."/>
            <person name="Zheng X.H."/>
            <person name="Zhong F.N."/>
            <person name="Zhong W."/>
            <person name="Zhou X."/>
            <person name="Zhu S.C."/>
            <person name="Zhu X."/>
            <person name="Smith H.O."/>
            <person name="Gibbs R.A."/>
            <person name="Myers E.W."/>
            <person name="Rubin G.M."/>
            <person name="Venter J.C."/>
        </authorList>
    </citation>
    <scope>NUCLEOTIDE SEQUENCE [LARGE SCALE GENOMIC DNA]</scope>
    <source>
        <strain>Berkeley</strain>
    </source>
</reference>
<reference key="2">
    <citation type="journal article" date="2002" name="Genome Biol.">
        <title>Annotation of the Drosophila melanogaster euchromatic genome: a systematic review.</title>
        <authorList>
            <person name="Misra S."/>
            <person name="Crosby M.A."/>
            <person name="Mungall C.J."/>
            <person name="Matthews B.B."/>
            <person name="Campbell K.S."/>
            <person name="Hradecky P."/>
            <person name="Huang Y."/>
            <person name="Kaminker J.S."/>
            <person name="Millburn G.H."/>
            <person name="Prochnik S.E."/>
            <person name="Smith C.D."/>
            <person name="Tupy J.L."/>
            <person name="Whitfield E.J."/>
            <person name="Bayraktaroglu L."/>
            <person name="Berman B.P."/>
            <person name="Bettencourt B.R."/>
            <person name="Celniker S.E."/>
            <person name="de Grey A.D.N.J."/>
            <person name="Drysdale R.A."/>
            <person name="Harris N.L."/>
            <person name="Richter J."/>
            <person name="Russo S."/>
            <person name="Schroeder A.J."/>
            <person name="Shu S.Q."/>
            <person name="Stapleton M."/>
            <person name="Yamada C."/>
            <person name="Ashburner M."/>
            <person name="Gelbart W.M."/>
            <person name="Rubin G.M."/>
            <person name="Lewis S.E."/>
        </authorList>
    </citation>
    <scope>GENOME REANNOTATION</scope>
    <source>
        <strain>Berkeley</strain>
    </source>
</reference>
<reference key="3">
    <citation type="submission" date="2007-01" db="EMBL/GenBank/DDBJ databases">
        <authorList>
            <person name="Stapleton M."/>
            <person name="Carlson J.W."/>
            <person name="Frise E."/>
            <person name="Kapadia B."/>
            <person name="Park S."/>
            <person name="Wan K.H."/>
            <person name="Yu C."/>
            <person name="Celniker S.E."/>
        </authorList>
    </citation>
    <scope>NUCLEOTIDE SEQUENCE [LARGE SCALE MRNA]</scope>
    <source>
        <strain>Berkeley</strain>
    </source>
</reference>
<reference key="4">
    <citation type="journal article" date="2004" name="Proc. Natl. Acad. Sci. U.S.A.">
        <title>MED16 and MED23 of Mediator are coactivators of lipopolysaccharide- and heat-shock-induced transcriptional activators.</title>
        <authorList>
            <person name="Kim T.W."/>
            <person name="Kwon Y.-J."/>
            <person name="Kim J.M."/>
            <person name="Song Y.-H."/>
            <person name="Kim S.N."/>
            <person name="Kim Y.-J."/>
        </authorList>
    </citation>
    <scope>FUNCTION</scope>
    <scope>INTERACTION WITH HSF</scope>
</reference>
<organism>
    <name type="scientific">Drosophila melanogaster</name>
    <name type="common">Fruit fly</name>
    <dbReference type="NCBI Taxonomy" id="7227"/>
    <lineage>
        <taxon>Eukaryota</taxon>
        <taxon>Metazoa</taxon>
        <taxon>Ecdysozoa</taxon>
        <taxon>Arthropoda</taxon>
        <taxon>Hexapoda</taxon>
        <taxon>Insecta</taxon>
        <taxon>Pterygota</taxon>
        <taxon>Neoptera</taxon>
        <taxon>Endopterygota</taxon>
        <taxon>Diptera</taxon>
        <taxon>Brachycera</taxon>
        <taxon>Muscomorpha</taxon>
        <taxon>Ephydroidea</taxon>
        <taxon>Drosophilidae</taxon>
        <taxon>Drosophila</taxon>
        <taxon>Sophophora</taxon>
    </lineage>
</organism>
<name>MED23_DROME</name>
<gene>
    <name type="primary">MED23</name>
    <name type="synonym">Trap150</name>
    <name type="ORF">CG3695</name>
</gene>
<accession>Q9W1X7</accession>
<accession>A2RVE3</accession>
<sequence>METQVIDTVNEFLKVDSLDEAFVSVIVFKPNTEQERATRFANDLVTAFGNVAQENREQVLRLYLLRAAGASGYHIKVLMAALVKLVDAHVITARMLCDKVLMCEKLDFEHRTFWIESFRLIKRVIVQVDYKGVREIMKVCRDKAQWFPLNVNVTYMPQLLAVEDILRFIFDRNNCLLPAYFIANEIMRPFPYHWKLNRLMTDFVEEFRTTAQMVSIIGHASMLPIVEHFGYADHMMNSWRLDHNTLKFNFKGSLPYEPELLEEQKPLLRYVLEQPYSREMVSQMLNLQKHQKQRYNALEEQLVNLIVQAMEMTEANDATAGSGFNSSDEQITPYEWMWLHLSSQLIYFVLFQFVSFMHIVLALHEKLSKLELRKGRDQLMWILLQFISGSIQKNPITNFLPVFRLFDLLYPELEPLKLPDINKSSMVRHMAPICVWIHLMKKARVENMNITRPLPIALKNHYDFLQHLVTANTMMNMTLGNDFRIILICNAYSTNQEYFGRPMGLLLDALNGTSKSPNGGQIPAVTFSVTVLDSLTVHSKMSLIHSFVTQMLKQAQSKGQVPAAALLETYARLLVYTEIESLGIKGFLSQLMPTVFKNHAWAMLHTLMEMFSYRLHHVPTHYRVQLLSLLHSLSSVPQTNKMQLNLCFESTALRLITSIGSAEFQPQFSRYFNDKSPGAVASNESEELNRVLILTLARSMHVHGGGDEMQGWCKDFLSNIIQHTPHSWPMHSLACFPPALNEYFTQNNQPPENKQQLKKAVEEEYRTWTSMTNENDIIAHFLRPTTNPLFLCLLFKIIWETENISPVAYKILEGISARALSTHLRKFCDYLVAEVASSSDGRDFIHKCVDTINNMIWKFNVVTIDRVVLCLALRTHEGNEAQVCFLIIQLLLLKASELRNRVQEFCKDNNPDHWKQSNWQDKHLSFHQKYPEKFALDESASQIPLPVYFSNVCLRFLPVLDVVVHRFIELTITNVHQILGFILDHLSILYKFHDRPITYLYNTLHYYERILRDRPALKKKLVGAITSAFSEIRPPNWSVSEPYKVYLQSQDSLWTPELSYYMSLIRRLADTISGKNVFYSTDWRFNEFPNAPTHALYVTCVELLGLPVAPPLVASNLIDVIVSGYAVIPQKDIHSYINAVGIVLAALPEPYWSGIYDRLQDMLNTPNMLNWTYRFNAFELFNFKTVREAMLEKTYAVVLAVAHSVFHHMGAFKLAAMTRYLKEKLKPCVRTEQQLLYLCHVFGPFLQRIELEKPNAVAGIAVLLYEILEIVDKHHGPKPLQYMDQICDFLYHIKYIHVGNIIKNESEAIIKRLRPLLQMRLRFITHLNLEDIHTEKINDNTSNNAITSQTQSPMQTQHQQQPQQPHQQQQQQQQQQQQQQQQQQQQQQMQQQQINAVQTTSVPLGSGGNLQQQQQINQQQQMYMQHMQQHQHMQNMRHN</sequence>
<keyword id="KW-0010">Activator</keyword>
<keyword id="KW-0175">Coiled coil</keyword>
<keyword id="KW-0539">Nucleus</keyword>
<keyword id="KW-1185">Reference proteome</keyword>
<keyword id="KW-0804">Transcription</keyword>
<keyword id="KW-0805">Transcription regulation</keyword>
<protein>
    <recommendedName>
        <fullName>Mediator of RNA polymerase II transcription subunit 23</fullName>
    </recommendedName>
    <alternativeName>
        <fullName>Mediator complex subunit 23</fullName>
    </alternativeName>
    <alternativeName>
        <fullName>dSUR2</fullName>
    </alternativeName>
    <alternativeName>
        <fullName>dTRAP150</fullName>
    </alternativeName>
</protein>
<feature type="chain" id="PRO_0000305937" description="Mediator of RNA polymerase II transcription subunit 23">
    <location>
        <begin position="1"/>
        <end position="1439"/>
    </location>
</feature>
<feature type="region of interest" description="Interaction with Hsf">
    <location>
        <begin position="358"/>
        <end position="625"/>
    </location>
</feature>
<feature type="region of interest" description="Disordered" evidence="3">
    <location>
        <begin position="1338"/>
        <end position="1372"/>
    </location>
</feature>
<feature type="region of interest" description="Disordered" evidence="3">
    <location>
        <begin position="1401"/>
        <end position="1439"/>
    </location>
</feature>
<feature type="coiled-coil region" evidence="2">
    <location>
        <begin position="282"/>
        <end position="318"/>
    </location>
</feature>
<feature type="compositionally biased region" description="Low complexity" evidence="3">
    <location>
        <begin position="1348"/>
        <end position="1372"/>
    </location>
</feature>
<feature type="compositionally biased region" description="Low complexity" evidence="3">
    <location>
        <begin position="1411"/>
        <end position="1439"/>
    </location>
</feature>
<feature type="sequence conflict" description="In Ref. 3; ABM92808." evidence="5" ref="3">
    <original>T</original>
    <variation>A</variation>
    <location>
        <position position="3"/>
    </location>
</feature>
<feature type="sequence conflict" description="In Ref. 3; ABM92808." evidence="5" ref="3">
    <original>G</original>
    <variation>S</variation>
    <location>
        <position position="504"/>
    </location>
</feature>
<feature type="sequence conflict" description="In Ref. 3; ABM92808." evidence="5" ref="3">
    <original>M</original>
    <variation>L</variation>
    <location>
        <position position="1319"/>
    </location>
</feature>
<feature type="sequence conflict" description="In Ref. 3; ABM92808." evidence="5" ref="3">
    <original>H</original>
    <variation>HQ</variation>
    <location>
        <position position="1366"/>
    </location>
</feature>
<dbReference type="EMBL" id="AE013599">
    <property type="protein sequence ID" value="AAF46925.1"/>
    <property type="molecule type" value="Genomic_DNA"/>
</dbReference>
<dbReference type="EMBL" id="BT029934">
    <property type="protein sequence ID" value="ABM92808.1"/>
    <property type="status" value="ALT_INIT"/>
    <property type="molecule type" value="mRNA"/>
</dbReference>
<dbReference type="RefSeq" id="NP_611735.1">
    <property type="nucleotide sequence ID" value="NM_137891.3"/>
</dbReference>
<dbReference type="SMR" id="Q9W1X7"/>
<dbReference type="BioGRID" id="63250">
    <property type="interactions" value="34"/>
</dbReference>
<dbReference type="ComplexPortal" id="CPX-2308">
    <property type="entry name" value="Core mediator complex"/>
</dbReference>
<dbReference type="FunCoup" id="Q9W1X7">
    <property type="interactions" value="1387"/>
</dbReference>
<dbReference type="IntAct" id="Q9W1X7">
    <property type="interactions" value="56"/>
</dbReference>
<dbReference type="STRING" id="7227.FBpp0071814"/>
<dbReference type="PaxDb" id="7227-FBpp0289089"/>
<dbReference type="EnsemblMetazoa" id="FBtr0071903">
    <property type="protein sequence ID" value="FBpp0071814"/>
    <property type="gene ID" value="FBgn0034795"/>
</dbReference>
<dbReference type="GeneID" id="37639"/>
<dbReference type="KEGG" id="dme:Dmel_CG3695"/>
<dbReference type="AGR" id="FB:FBgn0034795"/>
<dbReference type="CTD" id="9439"/>
<dbReference type="FlyBase" id="FBgn0034795">
    <property type="gene designation" value="MED23"/>
</dbReference>
<dbReference type="VEuPathDB" id="VectorBase:FBgn0034795"/>
<dbReference type="eggNOG" id="KOG1883">
    <property type="taxonomic scope" value="Eukaryota"/>
</dbReference>
<dbReference type="GeneTree" id="ENSGT00390000010380"/>
<dbReference type="HOGENOM" id="CLU_002773_0_0_1"/>
<dbReference type="InParanoid" id="Q9W1X7"/>
<dbReference type="OMA" id="QKHQKQR"/>
<dbReference type="OrthoDB" id="9982951at2759"/>
<dbReference type="PhylomeDB" id="Q9W1X7"/>
<dbReference type="Reactome" id="R-DME-9841922">
    <property type="pathway name" value="MLL4 and MLL3 complexes regulate expression of PPARG target genes in adipogenesis and hepatic steatosis"/>
</dbReference>
<dbReference type="BioGRID-ORCS" id="37639">
    <property type="hits" value="0 hits in 1 CRISPR screen"/>
</dbReference>
<dbReference type="GenomeRNAi" id="37639"/>
<dbReference type="PRO" id="PR:Q9W1X7"/>
<dbReference type="Proteomes" id="UP000000803">
    <property type="component" value="Chromosome 2R"/>
</dbReference>
<dbReference type="Bgee" id="FBgn0034795">
    <property type="expression patterns" value="Expressed in wing disc and 11 other cell types or tissues"/>
</dbReference>
<dbReference type="GO" id="GO:0016592">
    <property type="term" value="C:mediator complex"/>
    <property type="evidence" value="ECO:0000250"/>
    <property type="project" value="UniProtKB"/>
</dbReference>
<dbReference type="GO" id="GO:0005667">
    <property type="term" value="C:transcription regulator complex"/>
    <property type="evidence" value="ECO:0000318"/>
    <property type="project" value="GO_Central"/>
</dbReference>
<dbReference type="GO" id="GO:0003712">
    <property type="term" value="F:transcription coregulator activity"/>
    <property type="evidence" value="ECO:0000250"/>
    <property type="project" value="UniProtKB"/>
</dbReference>
<dbReference type="GO" id="GO:0010628">
    <property type="term" value="P:positive regulation of gene expression"/>
    <property type="evidence" value="ECO:0000318"/>
    <property type="project" value="GO_Central"/>
</dbReference>
<dbReference type="GO" id="GO:0006357">
    <property type="term" value="P:regulation of transcription by RNA polymerase II"/>
    <property type="evidence" value="ECO:0000250"/>
    <property type="project" value="UniProtKB"/>
</dbReference>
<dbReference type="InterPro" id="IPR021629">
    <property type="entry name" value="Mediator_Med23"/>
</dbReference>
<dbReference type="PANTHER" id="PTHR12691">
    <property type="entry name" value="MEDIATOR OF RNA POLYMERASE II TRANSCRIPTION SUBUNIT 23"/>
    <property type="match status" value="1"/>
</dbReference>
<dbReference type="PANTHER" id="PTHR12691:SF10">
    <property type="entry name" value="MEDIATOR OF RNA POLYMERASE II TRANSCRIPTION SUBUNIT 23"/>
    <property type="match status" value="1"/>
</dbReference>
<dbReference type="Pfam" id="PF11573">
    <property type="entry name" value="Med23"/>
    <property type="match status" value="1"/>
</dbReference>
<proteinExistence type="evidence at protein level"/>
<comment type="function">
    <text evidence="1 4">Component of the Mediator complex, a coactivator involved in the regulated transcription of nearly all RNA polymerase II-dependent genes. Mediator functions as a bridge to convey information from gene-specific regulatory proteins to the basal RNA polymerase II transcription machinery. Mediator is recruited to promoters by direct interactions with regulatory proteins and serves as a scaffold for the assembly of a functional preinitiation complex with RNA polymerase II and the general transcription factors (By similarity). Required for transcriptional activation in response to heat shock.</text>
</comment>
<comment type="subunit">
    <text evidence="1 4">Component of the Mediator complex (By similarity). Interacts with Hsf.</text>
</comment>
<comment type="subcellular location">
    <subcellularLocation>
        <location evidence="5">Nucleus</location>
    </subcellularLocation>
</comment>
<comment type="similarity">
    <text evidence="5">Belongs to the Mediator complex subunit 23 family.</text>
</comment>
<comment type="sequence caution" evidence="5">
    <conflict type="erroneous initiation">
        <sequence resource="EMBL-CDS" id="ABM92808"/>
    </conflict>
</comment>